<comment type="function">
    <text evidence="3">Required for maintaining cell viability in nitrogen-deficient stationary phase (G0) cells.</text>
</comment>
<comment type="subcellular location">
    <subcellularLocation>
        <location evidence="2">Nucleus</location>
    </subcellularLocation>
    <subcellularLocation>
        <location evidence="2">Cytoplasm</location>
        <location evidence="2">Cytoskeleton</location>
        <location evidence="2">Spindle</location>
    </subcellularLocation>
</comment>
<comment type="induction">
    <text evidence="3">Abundant in nitrogen-deficient G0 cells and rapidly decreases its levels upon nitrogen replenishment.</text>
</comment>
<comment type="disruption phenotype">
    <text evidence="3">Defective in supporting the G0 state, while normal under vegetative condition.</text>
</comment>
<gene>
    <name type="primary">klf1</name>
    <name type="ORF">SPAC1039.05c</name>
</gene>
<dbReference type="EMBL" id="CU329670">
    <property type="protein sequence ID" value="CAB63541.1"/>
    <property type="molecule type" value="Genomic_DNA"/>
</dbReference>
<dbReference type="PIR" id="T50055">
    <property type="entry name" value="T50055"/>
</dbReference>
<dbReference type="RefSeq" id="NP_594996.1">
    <property type="nucleotide sequence ID" value="NM_001020427.2"/>
</dbReference>
<dbReference type="SMR" id="Q9US36"/>
<dbReference type="BioGRID" id="278181">
    <property type="interactions" value="3"/>
</dbReference>
<dbReference type="FunCoup" id="Q9US36">
    <property type="interactions" value="8"/>
</dbReference>
<dbReference type="STRING" id="284812.Q9US36"/>
<dbReference type="iPTMnet" id="Q9US36"/>
<dbReference type="PaxDb" id="4896-SPAC1039.05c.1"/>
<dbReference type="EnsemblFungi" id="SPAC1039.05c.1">
    <property type="protein sequence ID" value="SPAC1039.05c.1:pep"/>
    <property type="gene ID" value="SPAC1039.05c"/>
</dbReference>
<dbReference type="GeneID" id="2541685"/>
<dbReference type="KEGG" id="spo:2541685"/>
<dbReference type="PomBase" id="SPAC1039.05c">
    <property type="gene designation" value="klf1"/>
</dbReference>
<dbReference type="VEuPathDB" id="FungiDB:SPAC1039.05c"/>
<dbReference type="eggNOG" id="KOG1721">
    <property type="taxonomic scope" value="Eukaryota"/>
</dbReference>
<dbReference type="HOGENOM" id="CLU_006466_2_0_1"/>
<dbReference type="InParanoid" id="Q9US36"/>
<dbReference type="OMA" id="IWCYNYC"/>
<dbReference type="PhylomeDB" id="Q9US36"/>
<dbReference type="PRO" id="PR:Q9US36"/>
<dbReference type="Proteomes" id="UP000002485">
    <property type="component" value="Chromosome I"/>
</dbReference>
<dbReference type="GO" id="GO:0000785">
    <property type="term" value="C:chromatin"/>
    <property type="evidence" value="ECO:0000314"/>
    <property type="project" value="PomBase"/>
</dbReference>
<dbReference type="GO" id="GO:0005737">
    <property type="term" value="C:cytoplasm"/>
    <property type="evidence" value="ECO:0007669"/>
    <property type="project" value="UniProtKB-KW"/>
</dbReference>
<dbReference type="GO" id="GO:0072686">
    <property type="term" value="C:mitotic spindle"/>
    <property type="evidence" value="ECO:0007005"/>
    <property type="project" value="PomBase"/>
</dbReference>
<dbReference type="GO" id="GO:0005730">
    <property type="term" value="C:nucleolus"/>
    <property type="evidence" value="ECO:0000314"/>
    <property type="project" value="PomBase"/>
</dbReference>
<dbReference type="GO" id="GO:0005634">
    <property type="term" value="C:nucleus"/>
    <property type="evidence" value="ECO:0007005"/>
    <property type="project" value="PomBase"/>
</dbReference>
<dbReference type="GO" id="GO:0001228">
    <property type="term" value="F:DNA-binding transcription activator activity, RNA polymerase II-specific"/>
    <property type="evidence" value="ECO:0000255"/>
    <property type="project" value="PomBase"/>
</dbReference>
<dbReference type="GO" id="GO:0000981">
    <property type="term" value="F:DNA-binding transcription factor activity, RNA polymerase II-specific"/>
    <property type="evidence" value="ECO:0000318"/>
    <property type="project" value="GO_Central"/>
</dbReference>
<dbReference type="GO" id="GO:0000978">
    <property type="term" value="F:RNA polymerase II cis-regulatory region sequence-specific DNA binding"/>
    <property type="evidence" value="ECO:0000318"/>
    <property type="project" value="GO_Central"/>
</dbReference>
<dbReference type="GO" id="GO:0008270">
    <property type="term" value="F:zinc ion binding"/>
    <property type="evidence" value="ECO:0007669"/>
    <property type="project" value="UniProtKB-KW"/>
</dbReference>
<dbReference type="GO" id="GO:0006351">
    <property type="term" value="P:DNA-templated transcription"/>
    <property type="evidence" value="ECO:0007669"/>
    <property type="project" value="InterPro"/>
</dbReference>
<dbReference type="GO" id="GO:0000122">
    <property type="term" value="P:negative regulation of transcription by RNA polymerase II"/>
    <property type="evidence" value="ECO:0000315"/>
    <property type="project" value="PomBase"/>
</dbReference>
<dbReference type="GO" id="GO:0045944">
    <property type="term" value="P:positive regulation of transcription by RNA polymerase II"/>
    <property type="evidence" value="ECO:0000315"/>
    <property type="project" value="PomBase"/>
</dbReference>
<dbReference type="GO" id="GO:0060237">
    <property type="term" value="P:regulation of fungal-type cell wall organization"/>
    <property type="evidence" value="ECO:0000315"/>
    <property type="project" value="PomBase"/>
</dbReference>
<dbReference type="GO" id="GO:0006357">
    <property type="term" value="P:regulation of transcription by RNA polymerase II"/>
    <property type="evidence" value="ECO:0000318"/>
    <property type="project" value="GO_Central"/>
</dbReference>
<dbReference type="CDD" id="cd12148">
    <property type="entry name" value="fungal_TF_MHR"/>
    <property type="match status" value="1"/>
</dbReference>
<dbReference type="FunFam" id="3.30.160.60:FF:005292">
    <property type="match status" value="1"/>
</dbReference>
<dbReference type="Gene3D" id="3.30.160.60">
    <property type="entry name" value="Classic Zinc Finger"/>
    <property type="match status" value="2"/>
</dbReference>
<dbReference type="InterPro" id="IPR007219">
    <property type="entry name" value="Transcription_factor_dom_fun"/>
</dbReference>
<dbReference type="InterPro" id="IPR051059">
    <property type="entry name" value="VerF-like"/>
</dbReference>
<dbReference type="InterPro" id="IPR036236">
    <property type="entry name" value="Znf_C2H2_sf"/>
</dbReference>
<dbReference type="InterPro" id="IPR013087">
    <property type="entry name" value="Znf_C2H2_type"/>
</dbReference>
<dbReference type="PANTHER" id="PTHR40626">
    <property type="entry name" value="MIP31509P"/>
    <property type="match status" value="1"/>
</dbReference>
<dbReference type="PANTHER" id="PTHR40626:SF11">
    <property type="entry name" value="ZINC FINGER PROTEIN YPR022C"/>
    <property type="match status" value="1"/>
</dbReference>
<dbReference type="Pfam" id="PF04082">
    <property type="entry name" value="Fungal_trans"/>
    <property type="match status" value="1"/>
</dbReference>
<dbReference type="Pfam" id="PF00096">
    <property type="entry name" value="zf-C2H2"/>
    <property type="match status" value="1"/>
</dbReference>
<dbReference type="SMART" id="SM00355">
    <property type="entry name" value="ZnF_C2H2"/>
    <property type="match status" value="2"/>
</dbReference>
<dbReference type="SUPFAM" id="SSF57667">
    <property type="entry name" value="beta-beta-alpha zinc fingers"/>
    <property type="match status" value="1"/>
</dbReference>
<dbReference type="PROSITE" id="PS00028">
    <property type="entry name" value="ZINC_FINGER_C2H2_1"/>
    <property type="match status" value="2"/>
</dbReference>
<dbReference type="PROSITE" id="PS50157">
    <property type="entry name" value="ZINC_FINGER_C2H2_2"/>
    <property type="match status" value="2"/>
</dbReference>
<accession>Q9US36</accession>
<proteinExistence type="evidence at transcript level"/>
<keyword id="KW-0963">Cytoplasm</keyword>
<keyword id="KW-0206">Cytoskeleton</keyword>
<keyword id="KW-0479">Metal-binding</keyword>
<keyword id="KW-0539">Nucleus</keyword>
<keyword id="KW-1185">Reference proteome</keyword>
<keyword id="KW-0677">Repeat</keyword>
<keyword id="KW-0862">Zinc</keyword>
<keyword id="KW-0863">Zinc-finger</keyword>
<sequence length="781" mass="89010">MTKAKKSRAYQEGDIRYKCDFQGCTKSFTRKEHARRHFRSHTNSKAFICPHCSSSFTRSDVLNRHVNQKHVKQNDAGSQTHPKHDKTLISSSDQELPFPSYVEADVQDAAYTDLKSHIDQPILPDQPIISDNFNEGLQSAIAQTGNNYMFTTSRRNNSISGSITIPESDQQINLQNKFLSTPSIKNNANKSLSPQDSISIFGTSPFNAYQQNTDNFVCWLFDNMEKDAPTESVSNFTDGINAKQLNLMPVLDSPTIDFLSSHFRVDDKLVAKDLLSLSAYSSLIQVMNNNYQLSEEALQYITRSRVNLWIAHYWKDFHPRWPFLHRGTLKVDEAPVELLLAMITMGMHFVGDAFAYSIAVSIHSTLRFSIYTHPDFKPPASLWVYQALLIAEIFEKMTSTVEQHNLSQIFHGVTIESMQNGLSSKDTVTEKIPKNMTGTNIAQHKWHQWVDREASKRIAFFSFVLDSQHVILFGYRPLIDITSVGLPLLCDEALWNADSYEAWTSLLNENDPPHFFPVLKMFLTNEHLPPKLSPWNMMIVLHGLTTIGWILSRENLGIVENIMQNNGTNLKNWRILLKASYKFWLRTYRVFFLNNGTLPLNHPYVRGCLATYELAHISLHTNIVALQTYAKSIVSTSRRLYASTSRYVSAWLASDDSEVSIKHAVDMVEAFLGGDMEYDVQNETGLHRPWCLYVSTLILWAYGYVSDGRCEMLEPGNNDCKSQLNAYLMQMRTGLSEKAKDHVYVRSKTLPLLKCVIDVLCPARWGLLVDGVRILSKLVQL</sequence>
<name>KLF1_SCHPO</name>
<feature type="chain" id="PRO_0000310842" description="Zinc finger protein klf1">
    <location>
        <begin position="1"/>
        <end position="781"/>
    </location>
</feature>
<feature type="zinc finger region" description="C2H2-type 1" evidence="1">
    <location>
        <begin position="17"/>
        <end position="41"/>
    </location>
</feature>
<feature type="zinc finger region" description="C2H2-type 2" evidence="1">
    <location>
        <begin position="47"/>
        <end position="70"/>
    </location>
</feature>
<evidence type="ECO:0000255" key="1">
    <source>
        <dbReference type="PROSITE-ProRule" id="PRU00042"/>
    </source>
</evidence>
<evidence type="ECO:0000269" key="2">
    <source>
    </source>
</evidence>
<evidence type="ECO:0000269" key="3">
    <source>
    </source>
</evidence>
<reference key="1">
    <citation type="journal article" date="2002" name="Nature">
        <title>The genome sequence of Schizosaccharomyces pombe.</title>
        <authorList>
            <person name="Wood V."/>
            <person name="Gwilliam R."/>
            <person name="Rajandream M.A."/>
            <person name="Lyne M.H."/>
            <person name="Lyne R."/>
            <person name="Stewart A."/>
            <person name="Sgouros J.G."/>
            <person name="Peat N."/>
            <person name="Hayles J."/>
            <person name="Baker S.G."/>
            <person name="Basham D."/>
            <person name="Bowman S."/>
            <person name="Brooks K."/>
            <person name="Brown D."/>
            <person name="Brown S."/>
            <person name="Chillingworth T."/>
            <person name="Churcher C.M."/>
            <person name="Collins M."/>
            <person name="Connor R."/>
            <person name="Cronin A."/>
            <person name="Davis P."/>
            <person name="Feltwell T."/>
            <person name="Fraser A."/>
            <person name="Gentles S."/>
            <person name="Goble A."/>
            <person name="Hamlin N."/>
            <person name="Harris D.E."/>
            <person name="Hidalgo J."/>
            <person name="Hodgson G."/>
            <person name="Holroyd S."/>
            <person name="Hornsby T."/>
            <person name="Howarth S."/>
            <person name="Huckle E.J."/>
            <person name="Hunt S."/>
            <person name="Jagels K."/>
            <person name="James K.D."/>
            <person name="Jones L."/>
            <person name="Jones M."/>
            <person name="Leather S."/>
            <person name="McDonald S."/>
            <person name="McLean J."/>
            <person name="Mooney P."/>
            <person name="Moule S."/>
            <person name="Mungall K.L."/>
            <person name="Murphy L.D."/>
            <person name="Niblett D."/>
            <person name="Odell C."/>
            <person name="Oliver K."/>
            <person name="O'Neil S."/>
            <person name="Pearson D."/>
            <person name="Quail M.A."/>
            <person name="Rabbinowitsch E."/>
            <person name="Rutherford K.M."/>
            <person name="Rutter S."/>
            <person name="Saunders D."/>
            <person name="Seeger K."/>
            <person name="Sharp S."/>
            <person name="Skelton J."/>
            <person name="Simmonds M.N."/>
            <person name="Squares R."/>
            <person name="Squares S."/>
            <person name="Stevens K."/>
            <person name="Taylor K."/>
            <person name="Taylor R.G."/>
            <person name="Tivey A."/>
            <person name="Walsh S.V."/>
            <person name="Warren T."/>
            <person name="Whitehead S."/>
            <person name="Woodward J.R."/>
            <person name="Volckaert G."/>
            <person name="Aert R."/>
            <person name="Robben J."/>
            <person name="Grymonprez B."/>
            <person name="Weltjens I."/>
            <person name="Vanstreels E."/>
            <person name="Rieger M."/>
            <person name="Schaefer M."/>
            <person name="Mueller-Auer S."/>
            <person name="Gabel C."/>
            <person name="Fuchs M."/>
            <person name="Duesterhoeft A."/>
            <person name="Fritzc C."/>
            <person name="Holzer E."/>
            <person name="Moestl D."/>
            <person name="Hilbert H."/>
            <person name="Borzym K."/>
            <person name="Langer I."/>
            <person name="Beck A."/>
            <person name="Lehrach H."/>
            <person name="Reinhardt R."/>
            <person name="Pohl T.M."/>
            <person name="Eger P."/>
            <person name="Zimmermann W."/>
            <person name="Wedler H."/>
            <person name="Wambutt R."/>
            <person name="Purnelle B."/>
            <person name="Goffeau A."/>
            <person name="Cadieu E."/>
            <person name="Dreano S."/>
            <person name="Gloux S."/>
            <person name="Lelaure V."/>
            <person name="Mottier S."/>
            <person name="Galibert F."/>
            <person name="Aves S.J."/>
            <person name="Xiang Z."/>
            <person name="Hunt C."/>
            <person name="Moore K."/>
            <person name="Hurst S.M."/>
            <person name="Lucas M."/>
            <person name="Rochet M."/>
            <person name="Gaillardin C."/>
            <person name="Tallada V.A."/>
            <person name="Garzon A."/>
            <person name="Thode G."/>
            <person name="Daga R.R."/>
            <person name="Cruzado L."/>
            <person name="Jimenez J."/>
            <person name="Sanchez M."/>
            <person name="del Rey F."/>
            <person name="Benito J."/>
            <person name="Dominguez A."/>
            <person name="Revuelta J.L."/>
            <person name="Moreno S."/>
            <person name="Armstrong J."/>
            <person name="Forsburg S.L."/>
            <person name="Cerutti L."/>
            <person name="Lowe T."/>
            <person name="McCombie W.R."/>
            <person name="Paulsen I."/>
            <person name="Potashkin J."/>
            <person name="Shpakovski G.V."/>
            <person name="Ussery D."/>
            <person name="Barrell B.G."/>
            <person name="Nurse P."/>
        </authorList>
    </citation>
    <scope>NUCLEOTIDE SEQUENCE [LARGE SCALE GENOMIC DNA]</scope>
    <source>
        <strain>972 / ATCC 24843</strain>
    </source>
</reference>
<reference key="2">
    <citation type="journal article" date="2006" name="Nat. Biotechnol.">
        <title>ORFeome cloning and global analysis of protein localization in the fission yeast Schizosaccharomyces pombe.</title>
        <authorList>
            <person name="Matsuyama A."/>
            <person name="Arai R."/>
            <person name="Yashiroda Y."/>
            <person name="Shirai A."/>
            <person name="Kamata A."/>
            <person name="Sekido S."/>
            <person name="Kobayashi Y."/>
            <person name="Hashimoto A."/>
            <person name="Hamamoto M."/>
            <person name="Hiraoka Y."/>
            <person name="Horinouchi S."/>
            <person name="Yoshida M."/>
        </authorList>
    </citation>
    <scope>SUBCELLULAR LOCATION [LARGE SCALE ANALYSIS]</scope>
</reference>
<reference key="3">
    <citation type="journal article" date="2007" name="Genes Cells">
        <title>Two-step, extensive alterations in the transcriptome from G0 arrest to cell division in Schizosaccharomyces pombe.</title>
        <authorList>
            <person name="Shimanuki M."/>
            <person name="Chung S.Y."/>
            <person name="Chikashige Y."/>
            <person name="Kawasaki Y."/>
            <person name="Uehara L."/>
            <person name="Tsutsumi C."/>
            <person name="Hatanaka M."/>
            <person name="Hiraoka Y."/>
            <person name="Nagao K."/>
            <person name="Yanagida M."/>
        </authorList>
    </citation>
    <scope>FUNCTION</scope>
    <scope>INDUCTION</scope>
    <scope>DISRUPTION PHENOTYPE</scope>
</reference>
<protein>
    <recommendedName>
        <fullName>Zinc finger protein klf1</fullName>
    </recommendedName>
    <alternativeName>
        <fullName>Krueppel-like zinc finger transcription factor 1</fullName>
    </alternativeName>
</protein>
<organism>
    <name type="scientific">Schizosaccharomyces pombe (strain 972 / ATCC 24843)</name>
    <name type="common">Fission yeast</name>
    <dbReference type="NCBI Taxonomy" id="284812"/>
    <lineage>
        <taxon>Eukaryota</taxon>
        <taxon>Fungi</taxon>
        <taxon>Dikarya</taxon>
        <taxon>Ascomycota</taxon>
        <taxon>Taphrinomycotina</taxon>
        <taxon>Schizosaccharomycetes</taxon>
        <taxon>Schizosaccharomycetales</taxon>
        <taxon>Schizosaccharomycetaceae</taxon>
        <taxon>Schizosaccharomyces</taxon>
    </lineage>
</organism>